<dbReference type="EMBL" id="AB022223">
    <property type="protein sequence ID" value="BAB01241.1"/>
    <property type="molecule type" value="Genomic_DNA"/>
</dbReference>
<dbReference type="EMBL" id="CP002686">
    <property type="protein sequence ID" value="AEE76662.1"/>
    <property type="molecule type" value="Genomic_DNA"/>
</dbReference>
<dbReference type="EMBL" id="AY058884">
    <property type="protein sequence ID" value="AAL24270.1"/>
    <property type="molecule type" value="mRNA"/>
</dbReference>
<dbReference type="EMBL" id="BT001010">
    <property type="protein sequence ID" value="AAN46764.1"/>
    <property type="molecule type" value="mRNA"/>
</dbReference>
<dbReference type="RefSeq" id="NP_188905.1">
    <property type="nucleotide sequence ID" value="NM_113165.4"/>
</dbReference>
<dbReference type="SMR" id="Q9LUJ5"/>
<dbReference type="BioGRID" id="7169">
    <property type="interactions" value="2"/>
</dbReference>
<dbReference type="FunCoup" id="Q9LUJ5">
    <property type="interactions" value="3506"/>
</dbReference>
<dbReference type="IntAct" id="Q9LUJ5">
    <property type="interactions" value="1"/>
</dbReference>
<dbReference type="STRING" id="3702.Q9LUJ5"/>
<dbReference type="PaxDb" id="3702-AT3G22660.1"/>
<dbReference type="ProteomicsDB" id="224712"/>
<dbReference type="EnsemblPlants" id="AT3G22660.1">
    <property type="protein sequence ID" value="AT3G22660.1"/>
    <property type="gene ID" value="AT3G22660"/>
</dbReference>
<dbReference type="GeneID" id="821837"/>
<dbReference type="Gramene" id="AT3G22660.1">
    <property type="protein sequence ID" value="AT3G22660.1"/>
    <property type="gene ID" value="AT3G22660"/>
</dbReference>
<dbReference type="KEGG" id="ath:AT3G22660"/>
<dbReference type="Araport" id="AT3G22660"/>
<dbReference type="TAIR" id="AT3G22660">
    <property type="gene designation" value="EBP2"/>
</dbReference>
<dbReference type="eggNOG" id="KOG3080">
    <property type="taxonomic scope" value="Eukaryota"/>
</dbReference>
<dbReference type="HOGENOM" id="CLU_036007_4_0_1"/>
<dbReference type="InParanoid" id="Q9LUJ5"/>
<dbReference type="OMA" id="RETMFHR"/>
<dbReference type="OrthoDB" id="443772at2759"/>
<dbReference type="PhylomeDB" id="Q9LUJ5"/>
<dbReference type="CD-CODE" id="4299E36E">
    <property type="entry name" value="Nucleolus"/>
</dbReference>
<dbReference type="PRO" id="PR:Q9LUJ5"/>
<dbReference type="Proteomes" id="UP000006548">
    <property type="component" value="Chromosome 3"/>
</dbReference>
<dbReference type="ExpressionAtlas" id="Q9LUJ5">
    <property type="expression patterns" value="baseline and differential"/>
</dbReference>
<dbReference type="GO" id="GO:0005730">
    <property type="term" value="C:nucleolus"/>
    <property type="evidence" value="ECO:0000314"/>
    <property type="project" value="UniProtKB"/>
</dbReference>
<dbReference type="GO" id="GO:0003924">
    <property type="term" value="F:GTPase activity"/>
    <property type="evidence" value="ECO:0000314"/>
    <property type="project" value="UniProtKB"/>
</dbReference>
<dbReference type="GO" id="GO:0003723">
    <property type="term" value="F:RNA binding"/>
    <property type="evidence" value="ECO:0000314"/>
    <property type="project" value="UniProtKB"/>
</dbReference>
<dbReference type="GO" id="GO:0042273">
    <property type="term" value="P:ribosomal large subunit biogenesis"/>
    <property type="evidence" value="ECO:0000315"/>
    <property type="project" value="UniProtKB"/>
</dbReference>
<dbReference type="InterPro" id="IPR008610">
    <property type="entry name" value="Ebp2"/>
</dbReference>
<dbReference type="PANTHER" id="PTHR13028">
    <property type="entry name" value="RRNA PROCESSING PROTEIN EBNA1-BINDING PROTEIN-RELATED"/>
    <property type="match status" value="1"/>
</dbReference>
<dbReference type="PANTHER" id="PTHR13028:SF0">
    <property type="entry name" value="RRNA-PROCESSING PROTEIN EBP2-RELATED"/>
    <property type="match status" value="1"/>
</dbReference>
<dbReference type="Pfam" id="PF05890">
    <property type="entry name" value="Ebp2"/>
    <property type="match status" value="1"/>
</dbReference>
<proteinExistence type="evidence at protein level"/>
<gene>
    <name evidence="5" type="primary">EBP2</name>
    <name type="ordered locus">At3g22660</name>
    <name type="ORF">MWI23.3</name>
</gene>
<accession>Q9LUJ5</accession>
<evidence type="ECO:0000250" key="1">
    <source>
        <dbReference type="UniProtKB" id="P36049"/>
    </source>
</evidence>
<evidence type="ECO:0000255" key="2"/>
<evidence type="ECO:0000256" key="3">
    <source>
        <dbReference type="SAM" id="MobiDB-lite"/>
    </source>
</evidence>
<evidence type="ECO:0000269" key="4">
    <source>
    </source>
</evidence>
<evidence type="ECO:0000305" key="5"/>
<reference key="1">
    <citation type="journal article" date="2000" name="DNA Res.">
        <title>Structural analysis of Arabidopsis thaliana chromosome 3. I. Sequence features of the regions of 4,504,864 bp covered by sixty P1 and TAC clones.</title>
        <authorList>
            <person name="Sato S."/>
            <person name="Nakamura Y."/>
            <person name="Kaneko T."/>
            <person name="Katoh T."/>
            <person name="Asamizu E."/>
            <person name="Tabata S."/>
        </authorList>
    </citation>
    <scope>NUCLEOTIDE SEQUENCE [LARGE SCALE GENOMIC DNA]</scope>
    <source>
        <strain>cv. Columbia</strain>
    </source>
</reference>
<reference key="2">
    <citation type="journal article" date="2017" name="Plant J.">
        <title>Araport11: a complete reannotation of the Arabidopsis thaliana reference genome.</title>
        <authorList>
            <person name="Cheng C.Y."/>
            <person name="Krishnakumar V."/>
            <person name="Chan A.P."/>
            <person name="Thibaud-Nissen F."/>
            <person name="Schobel S."/>
            <person name="Town C.D."/>
        </authorList>
    </citation>
    <scope>GENOME REANNOTATION</scope>
    <source>
        <strain>cv. Columbia</strain>
    </source>
</reference>
<reference key="3">
    <citation type="journal article" date="2003" name="Science">
        <title>Empirical analysis of transcriptional activity in the Arabidopsis genome.</title>
        <authorList>
            <person name="Yamada K."/>
            <person name="Lim J."/>
            <person name="Dale J.M."/>
            <person name="Chen H."/>
            <person name="Shinn P."/>
            <person name="Palm C.J."/>
            <person name="Southwick A.M."/>
            <person name="Wu H.C."/>
            <person name="Kim C.J."/>
            <person name="Nguyen M."/>
            <person name="Pham P.K."/>
            <person name="Cheuk R.F."/>
            <person name="Karlin-Newmann G."/>
            <person name="Liu S.X."/>
            <person name="Lam B."/>
            <person name="Sakano H."/>
            <person name="Wu T."/>
            <person name="Yu G."/>
            <person name="Miranda M."/>
            <person name="Quach H.L."/>
            <person name="Tripp M."/>
            <person name="Chang C.H."/>
            <person name="Lee J.M."/>
            <person name="Toriumi M.J."/>
            <person name="Chan M.M."/>
            <person name="Tang C.C."/>
            <person name="Onodera C.S."/>
            <person name="Deng J.M."/>
            <person name="Akiyama K."/>
            <person name="Ansari Y."/>
            <person name="Arakawa T."/>
            <person name="Banh J."/>
            <person name="Banno F."/>
            <person name="Bowser L."/>
            <person name="Brooks S.Y."/>
            <person name="Carninci P."/>
            <person name="Chao Q."/>
            <person name="Choy N."/>
            <person name="Enju A."/>
            <person name="Goldsmith A.D."/>
            <person name="Gurjal M."/>
            <person name="Hansen N.F."/>
            <person name="Hayashizaki Y."/>
            <person name="Johnson-Hopson C."/>
            <person name="Hsuan V.W."/>
            <person name="Iida K."/>
            <person name="Karnes M."/>
            <person name="Khan S."/>
            <person name="Koesema E."/>
            <person name="Ishida J."/>
            <person name="Jiang P.X."/>
            <person name="Jones T."/>
            <person name="Kawai J."/>
            <person name="Kamiya A."/>
            <person name="Meyers C."/>
            <person name="Nakajima M."/>
            <person name="Narusaka M."/>
            <person name="Seki M."/>
            <person name="Sakurai T."/>
            <person name="Satou M."/>
            <person name="Tamse R."/>
            <person name="Vaysberg M."/>
            <person name="Wallender E.K."/>
            <person name="Wong C."/>
            <person name="Yamamura Y."/>
            <person name="Yuan S."/>
            <person name="Shinozaki K."/>
            <person name="Davis R.W."/>
            <person name="Theologis A."/>
            <person name="Ecker J.R."/>
        </authorList>
    </citation>
    <scope>NUCLEOTIDE SEQUENCE [LARGE SCALE MRNA]</scope>
    <source>
        <strain>cv. Columbia</strain>
    </source>
</reference>
<reference key="4">
    <citation type="journal article" date="2015" name="J. Exp. Bot.">
        <title>The nucleolar GTPase nucleostemin-like 1 plays a role in plant growth and senescence by modulating ribosome biogenesis.</title>
        <authorList>
            <person name="Jeon Y."/>
            <person name="Park Y.J."/>
            <person name="Cho H.K."/>
            <person name="Jung H.J."/>
            <person name="Ahn T.K."/>
            <person name="Kang H."/>
            <person name="Pai H.S."/>
        </authorList>
    </citation>
    <scope>FUNCTION</scope>
    <scope>INTERACTION WITH NSN1</scope>
    <scope>SUBCELLULAR LOCATION</scope>
</reference>
<name>EBP2_ARATH</name>
<sequence length="293" mass="33206">MSLEEDIVSDDEMNMIDEDDATDSEAESLSDSDTENEITEKLAEPTKTAIYNRDGLLDKLQDISWPEDVDWTHKLTVEIDQGGAVDVNDDLARETAFYTQALEGTREAFGKLNEMGVNFLRPANYYAEMVKSDVHMEKVKSRLLHEKKQIEESEERRKARDNKRMAKEVQSQKMKERAKEKKDNIESVKKWRKQRQQSGFSDKAGEPELDFESGKSFQRGGGKKRPGVSPGDRSGGKGRPTSRMGNKKREFRDSKFGHGGRKGLSKQNTAETTNDFKGGFRGGKASGNKRQKR</sequence>
<feature type="chain" id="PRO_0000119998" description="Probable rRNA-processing protein EBP2 homolog">
    <location>
        <begin position="1"/>
        <end position="293"/>
    </location>
</feature>
<feature type="region of interest" description="Disordered" evidence="3">
    <location>
        <begin position="1"/>
        <end position="45"/>
    </location>
</feature>
<feature type="region of interest" description="Disordered" evidence="3">
    <location>
        <begin position="150"/>
        <end position="293"/>
    </location>
</feature>
<feature type="coiled-coil region" evidence="2">
    <location>
        <begin position="135"/>
        <end position="190"/>
    </location>
</feature>
<feature type="compositionally biased region" description="Acidic residues" evidence="3">
    <location>
        <begin position="1"/>
        <end position="37"/>
    </location>
</feature>
<feature type="compositionally biased region" description="Basic and acidic residues" evidence="3">
    <location>
        <begin position="150"/>
        <end position="167"/>
    </location>
</feature>
<feature type="compositionally biased region" description="Basic and acidic residues" evidence="3">
    <location>
        <begin position="173"/>
        <end position="189"/>
    </location>
</feature>
<feature type="compositionally biased region" description="Basic and acidic residues" evidence="3">
    <location>
        <begin position="247"/>
        <end position="256"/>
    </location>
</feature>
<feature type="compositionally biased region" description="Polar residues" evidence="3">
    <location>
        <begin position="265"/>
        <end position="275"/>
    </location>
</feature>
<protein>
    <recommendedName>
        <fullName>Probable rRNA-processing protein EBP2 homolog</fullName>
    </recommendedName>
</protein>
<keyword id="KW-0175">Coiled coil</keyword>
<keyword id="KW-0539">Nucleus</keyword>
<keyword id="KW-1185">Reference proteome</keyword>
<keyword id="KW-0690">Ribosome biogenesis</keyword>
<comment type="function">
    <text evidence="1 4">Required for the processing of the 27S pre-rRNA (By similarity). Plays an important role in plant growth and senescence by modulating ribosome biogenesis in nucleolus. Associates with ribosomes (PubMed:26163696).</text>
</comment>
<comment type="subunit">
    <text evidence="4">Interacts with NSN1.</text>
</comment>
<comment type="interaction">
    <interactant intactId="EBI-25515709">
        <id>Q9LUJ5</id>
    </interactant>
    <interactant intactId="EBI-1806701">
        <id>Q9LQW3</id>
        <label>ZHD14</label>
    </interactant>
    <organismsDiffer>false</organismsDiffer>
    <experiments>3</experiments>
</comment>
<comment type="subcellular location">
    <subcellularLocation>
        <location evidence="4">Nucleus</location>
        <location evidence="4">Nucleolus</location>
    </subcellularLocation>
</comment>
<comment type="similarity">
    <text evidence="5">Belongs to the EBP2 family.</text>
</comment>
<organism>
    <name type="scientific">Arabidopsis thaliana</name>
    <name type="common">Mouse-ear cress</name>
    <dbReference type="NCBI Taxonomy" id="3702"/>
    <lineage>
        <taxon>Eukaryota</taxon>
        <taxon>Viridiplantae</taxon>
        <taxon>Streptophyta</taxon>
        <taxon>Embryophyta</taxon>
        <taxon>Tracheophyta</taxon>
        <taxon>Spermatophyta</taxon>
        <taxon>Magnoliopsida</taxon>
        <taxon>eudicotyledons</taxon>
        <taxon>Gunneridae</taxon>
        <taxon>Pentapetalae</taxon>
        <taxon>rosids</taxon>
        <taxon>malvids</taxon>
        <taxon>Brassicales</taxon>
        <taxon>Brassicaceae</taxon>
        <taxon>Camelineae</taxon>
        <taxon>Arabidopsis</taxon>
    </lineage>
</organism>